<protein>
    <recommendedName>
        <fullName evidence="4">Phenazine O-methyltransferase PhzM</fullName>
        <ecNumber evidence="3">2.1.1.-</ecNumber>
    </recommendedName>
    <alternativeName>
        <fullName evidence="4">SAM-dependent O-methyltransferase</fullName>
    </alternativeName>
</protein>
<gene>
    <name evidence="4 6" type="primary">phzM</name>
</gene>
<reference evidence="6" key="1">
    <citation type="journal article" date="2016" name="Org. Lett.">
        <title>Heterocyclic Aromatic N-Oxidation in the Biosynthesis of Phenazine Antibiotics from Lysobacter antibioticus.</title>
        <authorList>
            <person name="Zhao Y."/>
            <person name="Qian G."/>
            <person name="Ye Y."/>
            <person name="Wright S."/>
            <person name="Chen H."/>
            <person name="Shen Y."/>
            <person name="Liu F."/>
            <person name="Du L."/>
        </authorList>
    </citation>
    <scope>NUCLEOTIDE SEQUENCE [GENOMIC DNA]</scope>
    <source>
        <strain evidence="6">OH13</strain>
    </source>
</reference>
<reference evidence="7" key="2">
    <citation type="journal article" date="2018" name="ACS Chem. Biol.">
        <title>Functional and Structural Analysis of Phenazine O-Methyltransferase LaPhzM from Lysobacter antibioticus OH13 and One-Pot Enzymatic Synthesis of the Antibiotic Myxin.</title>
        <authorList>
            <person name="Jiang J."/>
            <person name="Guiza Beltran D."/>
            <person name="Schacht A."/>
            <person name="Wright S."/>
            <person name="Zhang L."/>
            <person name="Du L."/>
        </authorList>
    </citation>
    <scope>X-RAY CRYSTALLOGRAPHY (1.42 ANGSTROMS) IN COMPLEX WITH S-ADENOSYL-L-HOMOCYSTEINE</scope>
    <scope>FUNCTION</scope>
    <scope>CATALYTIC ACTIVITY</scope>
    <scope>BIOPHYSICOCHEMICAL PROPERTIES</scope>
    <scope>SUBSTRATE SPECIFICITY</scope>
    <scope>SUBUNIT</scope>
    <scope>ACTIVE SITE</scope>
    <source>
        <strain evidence="4">OH13</strain>
    </source>
</reference>
<dbReference type="EC" id="2.1.1.-" evidence="3"/>
<dbReference type="EMBL" id="KU900199">
    <property type="protein sequence ID" value="AMQ09360.2"/>
    <property type="molecule type" value="Genomic_DNA"/>
</dbReference>
<dbReference type="PDB" id="6C5B">
    <property type="method" value="X-ray"/>
    <property type="resolution" value="1.42 A"/>
    <property type="chains" value="A/B=1-341"/>
</dbReference>
<dbReference type="PDBsum" id="6C5B"/>
<dbReference type="SMR" id="A0A172J1V3"/>
<dbReference type="GO" id="GO:0042802">
    <property type="term" value="F:identical protein binding"/>
    <property type="evidence" value="ECO:0000314"/>
    <property type="project" value="UniProtKB"/>
</dbReference>
<dbReference type="GO" id="GO:0008171">
    <property type="term" value="F:O-methyltransferase activity"/>
    <property type="evidence" value="ECO:0000314"/>
    <property type="project" value="UniProtKB"/>
</dbReference>
<dbReference type="GO" id="GO:0042803">
    <property type="term" value="F:protein homodimerization activity"/>
    <property type="evidence" value="ECO:0000314"/>
    <property type="project" value="UniProtKB"/>
</dbReference>
<dbReference type="GO" id="GO:1904047">
    <property type="term" value="F:S-adenosyl-L-methionine binding"/>
    <property type="evidence" value="ECO:0000314"/>
    <property type="project" value="UniProtKB"/>
</dbReference>
<dbReference type="GO" id="GO:0008757">
    <property type="term" value="F:S-adenosylmethionine-dependent methyltransferase activity"/>
    <property type="evidence" value="ECO:0000314"/>
    <property type="project" value="UniProtKB"/>
</dbReference>
<dbReference type="GO" id="GO:0032259">
    <property type="term" value="P:methylation"/>
    <property type="evidence" value="ECO:0000314"/>
    <property type="project" value="UniProtKB"/>
</dbReference>
<dbReference type="GO" id="GO:0002047">
    <property type="term" value="P:phenazine biosynthetic process"/>
    <property type="evidence" value="ECO:0000314"/>
    <property type="project" value="UniProtKB"/>
</dbReference>
<dbReference type="CDD" id="cd02440">
    <property type="entry name" value="AdoMet_MTases"/>
    <property type="match status" value="1"/>
</dbReference>
<dbReference type="Gene3D" id="3.40.50.150">
    <property type="entry name" value="Vaccinia Virus protein VP39"/>
    <property type="match status" value="1"/>
</dbReference>
<dbReference type="Gene3D" id="1.10.10.10">
    <property type="entry name" value="Winged helix-like DNA-binding domain superfamily/Winged helix DNA-binding domain"/>
    <property type="match status" value="1"/>
</dbReference>
<dbReference type="InterPro" id="IPR016461">
    <property type="entry name" value="COMT-like"/>
</dbReference>
<dbReference type="InterPro" id="IPR001077">
    <property type="entry name" value="O_MeTrfase_dom"/>
</dbReference>
<dbReference type="InterPro" id="IPR012967">
    <property type="entry name" value="Plant_O-MeTrfase_dimerisation"/>
</dbReference>
<dbReference type="InterPro" id="IPR029063">
    <property type="entry name" value="SAM-dependent_MTases_sf"/>
</dbReference>
<dbReference type="InterPro" id="IPR036388">
    <property type="entry name" value="WH-like_DNA-bd_sf"/>
</dbReference>
<dbReference type="InterPro" id="IPR036390">
    <property type="entry name" value="WH_DNA-bd_sf"/>
</dbReference>
<dbReference type="PANTHER" id="PTHR43712:SF2">
    <property type="entry name" value="O-METHYLTRANSFERASE CICE"/>
    <property type="match status" value="1"/>
</dbReference>
<dbReference type="PANTHER" id="PTHR43712">
    <property type="entry name" value="PUTATIVE (AFU_ORTHOLOGUE AFUA_4G14580)-RELATED"/>
    <property type="match status" value="1"/>
</dbReference>
<dbReference type="Pfam" id="PF08100">
    <property type="entry name" value="Dimerisation"/>
    <property type="match status" value="1"/>
</dbReference>
<dbReference type="Pfam" id="PF00891">
    <property type="entry name" value="Methyltransf_2"/>
    <property type="match status" value="1"/>
</dbReference>
<dbReference type="PIRSF" id="PIRSF005739">
    <property type="entry name" value="O-mtase"/>
    <property type="match status" value="1"/>
</dbReference>
<dbReference type="SUPFAM" id="SSF53335">
    <property type="entry name" value="S-adenosyl-L-methionine-dependent methyltransferases"/>
    <property type="match status" value="1"/>
</dbReference>
<dbReference type="SUPFAM" id="SSF46785">
    <property type="entry name" value="Winged helix' DNA-binding domain"/>
    <property type="match status" value="1"/>
</dbReference>
<dbReference type="PROSITE" id="PS51683">
    <property type="entry name" value="SAM_OMT_II"/>
    <property type="match status" value="1"/>
</dbReference>
<comment type="function">
    <text evidence="3">Involved in the biosynthesis of phenazine natural products including myxin, an N(5),N(10)-dioxide phenazine antiobiotic, which has antimicrobial activity. O-methyltransferase, which converts iodinin (1,6-dihydroxyphenazine N(5),N(10)-dioxide) to myxin (1-hydroxy-6-methoxyphenazine N(5),N(10)-dioxide). Catalyzes both monomethoxy and dimethoxy formation of phenazine natural compounds. Acts on a wide variety of substrates, catalyzing O-methylation of phenazines with non-, mono- or di-N-oxide. Highest activity with 1,6-dihydroxyphenazine (DHP) as substrate. Less active with monohydroxy-containing and monohydroxy-monomethoxy-containing phenazines. Least active with non-phenazine substrates, such as 8-hydroxyquinoline and 6-hydroxyquinoline. Is not able to convert 1-hydroxyphenazine to 1-hydroxy-N5-methylphenazine (pyocyanine), hence does not function as an N-methyltransferase.</text>
</comment>
<comment type="catalytic activity">
    <reaction evidence="3">
        <text>1,6-dihydroxyphenazine + S-adenosyl-L-methionine = 1-hydroxy-6-methoxyphenazine + S-adenosyl-L-homocysteine + H(+)</text>
        <dbReference type="Rhea" id="RHEA:72523"/>
        <dbReference type="ChEBI" id="CHEBI:15378"/>
        <dbReference type="ChEBI" id="CHEBI:57856"/>
        <dbReference type="ChEBI" id="CHEBI:59789"/>
        <dbReference type="ChEBI" id="CHEBI:192365"/>
        <dbReference type="ChEBI" id="CHEBI:192366"/>
    </reaction>
    <physiologicalReaction direction="left-to-right" evidence="3">
        <dbReference type="Rhea" id="RHEA:72524"/>
    </physiologicalReaction>
</comment>
<comment type="catalytic activity">
    <reaction evidence="3">
        <text>1-hydroxy-6-methoxyphenazine + S-adenosyl-L-methionine = 1,6-dimethoxyphenazine + S-adenosyl-L-homocysteine + H(+)</text>
        <dbReference type="Rhea" id="RHEA:72527"/>
        <dbReference type="ChEBI" id="CHEBI:15378"/>
        <dbReference type="ChEBI" id="CHEBI:57856"/>
        <dbReference type="ChEBI" id="CHEBI:59789"/>
        <dbReference type="ChEBI" id="CHEBI:192366"/>
        <dbReference type="ChEBI" id="CHEBI:192367"/>
    </reaction>
    <physiologicalReaction direction="left-to-right" evidence="3">
        <dbReference type="Rhea" id="RHEA:72528"/>
    </physiologicalReaction>
</comment>
<comment type="catalytic activity">
    <reaction evidence="3">
        <text>1-hydroxy-6-methoxyphenazine N(10)-oxide + S-adenosyl-L-methionine = 1,6-dimethoxyphenazine N(5)-oxide + S-adenosyl-L-homocysteine</text>
        <dbReference type="Rhea" id="RHEA:72635"/>
        <dbReference type="ChEBI" id="CHEBI:57856"/>
        <dbReference type="ChEBI" id="CHEBI:59789"/>
        <dbReference type="ChEBI" id="CHEBI:192368"/>
        <dbReference type="ChEBI" id="CHEBI:192369"/>
    </reaction>
    <physiologicalReaction direction="left-to-right" evidence="3">
        <dbReference type="Rhea" id="RHEA:72636"/>
    </physiologicalReaction>
</comment>
<comment type="catalytic activity">
    <reaction evidence="3">
        <text>1,6-dihydroxyphenazine N(5),N(10)-dioxide + S-adenosyl-L-methionine = 1-hydroxy-6-methoxyphenazine N(5),N(10)-dioxide + S-adenosyl-L-homocysteine</text>
        <dbReference type="Rhea" id="RHEA:72639"/>
        <dbReference type="ChEBI" id="CHEBI:57856"/>
        <dbReference type="ChEBI" id="CHEBI:59789"/>
        <dbReference type="ChEBI" id="CHEBI:192372"/>
        <dbReference type="ChEBI" id="CHEBI:192373"/>
    </reaction>
    <physiologicalReaction direction="left-to-right" evidence="3">
        <dbReference type="Rhea" id="RHEA:72640"/>
    </physiologicalReaction>
</comment>
<comment type="catalytic activity">
    <reaction evidence="3">
        <text>1-hydroxy-6-methoxyphenazine N(5),N(10)-dioxide + S-adenosyl-L-methionine = 1,6-dimethoxyphenazine N(5),N(10)-dioxide + S-adenosyl-L-homocysteine</text>
        <dbReference type="Rhea" id="RHEA:72643"/>
        <dbReference type="ChEBI" id="CHEBI:57856"/>
        <dbReference type="ChEBI" id="CHEBI:59789"/>
        <dbReference type="ChEBI" id="CHEBI:192373"/>
        <dbReference type="ChEBI" id="CHEBI:192374"/>
    </reaction>
    <physiologicalReaction direction="left-to-right" evidence="3">
        <dbReference type="Rhea" id="RHEA:72644"/>
    </physiologicalReaction>
</comment>
<comment type="biophysicochemical properties">
    <kinetics>
        <KM evidence="3">33.6 uM for 6-hydroxy-1-methoxyphenazine N(5)-oxide (at pH 7.8 and at room temperature)</KM>
        <Vmax evidence="3">2.9 umol/min/mg enzyme with 6-hydroxy-1-methoxyphenazine N(5)-oxide as substrate (at pH 7.8 and at room temperature)</Vmax>
        <text evidence="3">kcat is 0.6 min(-1) with 6-hydroxy-1-methoxyphenazine N(5)-oxide as substrate.</text>
    </kinetics>
</comment>
<comment type="subunit">
    <text evidence="3">Homodimer.</text>
</comment>
<comment type="domain">
    <text evidence="5">Contains an N-terminal dimerization domain. The C-terminal region contains the S-adenosyl-L-methionine binding site.</text>
</comment>
<comment type="similarity">
    <text evidence="2">Belongs to the class I-like SAM-binding methyltransferase superfamily. Cation-independent O-methyltransferase family.</text>
</comment>
<organism>
    <name type="scientific">Lysobacter antibioticus</name>
    <dbReference type="NCBI Taxonomy" id="84531"/>
    <lineage>
        <taxon>Bacteria</taxon>
        <taxon>Pseudomonadati</taxon>
        <taxon>Pseudomonadota</taxon>
        <taxon>Gammaproteobacteria</taxon>
        <taxon>Lysobacterales</taxon>
        <taxon>Lysobacteraceae</taxon>
        <taxon>Lysobacter</taxon>
    </lineage>
</organism>
<keyword id="KW-0002">3D-structure</keyword>
<keyword id="KW-0489">Methyltransferase</keyword>
<keyword id="KW-0949">S-adenosyl-L-methionine</keyword>
<keyword id="KW-0808">Transferase</keyword>
<proteinExistence type="evidence at protein level"/>
<accession>A0A172J1V3</accession>
<name>PHZM_LYSAN</name>
<sequence>MTENNRAGAVPLSSILLQMITGYWVTQSLYVAAKLGIADLVADAPKPIEELAAKTGAKAPLLKRVLRTIASIGVFTETEPGIFGITPLAALLRSGTPDSMRPQAIMHGEEQYRAWADVLHNVQTGETAFEKEFGTSYFGYLAKHPEADRVFNEAQAGYTKQVAHAVVDAYDFSPFKTVIDIGAGYGPLLSAILRSQPEARGILFDQPHVAQAAGKRLAEAGVGDRCGTVGGDFFVEVPADGDVYILSLLLHDWDDQRSIEILRNCRRAMPAHGKLLIVELVLPEGEEPFFGKWLDLHMLVLLGAQERTADEFKTLFAASGFALERVLPTASGLSIVEARPI</sequence>
<evidence type="ECO:0000255" key="1">
    <source>
        <dbReference type="PIRSR" id="PIRSR005739-1"/>
    </source>
</evidence>
<evidence type="ECO:0000255" key="2">
    <source>
        <dbReference type="PROSITE-ProRule" id="PRU01020"/>
    </source>
</evidence>
<evidence type="ECO:0000269" key="3">
    <source>
    </source>
</evidence>
<evidence type="ECO:0000303" key="4">
    <source>
    </source>
</evidence>
<evidence type="ECO:0000305" key="5">
    <source>
    </source>
</evidence>
<evidence type="ECO:0000312" key="6">
    <source>
        <dbReference type="EMBL" id="AMQ09360.2"/>
    </source>
</evidence>
<evidence type="ECO:0007744" key="7">
    <source>
        <dbReference type="PDB" id="6C5B"/>
    </source>
</evidence>
<evidence type="ECO:0007829" key="8">
    <source>
        <dbReference type="PDB" id="6C5B"/>
    </source>
</evidence>
<feature type="chain" id="PRO_0000456637" description="Phenazine O-methyltransferase PhzM">
    <location>
        <begin position="1"/>
        <end position="341"/>
    </location>
</feature>
<feature type="active site" description="Proton acceptor" evidence="1 2 5">
    <location>
        <position position="251"/>
    </location>
</feature>
<feature type="binding site" evidence="2">
    <location>
        <position position="205"/>
    </location>
    <ligand>
        <name>S-adenosyl-L-methionine</name>
        <dbReference type="ChEBI" id="CHEBI:59789"/>
    </ligand>
</feature>
<feature type="binding site" evidence="2">
    <location>
        <begin position="231"/>
        <end position="233"/>
    </location>
    <ligand>
        <name>S-adenosyl-L-methionine</name>
        <dbReference type="ChEBI" id="CHEBI:59789"/>
    </ligand>
</feature>
<feature type="helix" evidence="8">
    <location>
        <begin position="12"/>
        <end position="20"/>
    </location>
</feature>
<feature type="helix" evidence="8">
    <location>
        <begin position="22"/>
        <end position="35"/>
    </location>
</feature>
<feature type="helix" evidence="8">
    <location>
        <begin position="37"/>
        <end position="40"/>
    </location>
</feature>
<feature type="strand" evidence="8">
    <location>
        <begin position="42"/>
        <end position="44"/>
    </location>
</feature>
<feature type="helix" evidence="8">
    <location>
        <begin position="48"/>
        <end position="55"/>
    </location>
</feature>
<feature type="helix" evidence="8">
    <location>
        <begin position="59"/>
        <end position="70"/>
    </location>
</feature>
<feature type="turn" evidence="8">
    <location>
        <begin position="71"/>
        <end position="73"/>
    </location>
</feature>
<feature type="strand" evidence="8">
    <location>
        <begin position="74"/>
        <end position="79"/>
    </location>
</feature>
<feature type="strand" evidence="8">
    <location>
        <begin position="82"/>
        <end position="84"/>
    </location>
</feature>
<feature type="helix" evidence="8">
    <location>
        <begin position="87"/>
        <end position="90"/>
    </location>
</feature>
<feature type="strand" evidence="8">
    <location>
        <begin position="93"/>
        <end position="95"/>
    </location>
</feature>
<feature type="helix" evidence="8">
    <location>
        <begin position="101"/>
        <end position="108"/>
    </location>
</feature>
<feature type="helix" evidence="8">
    <location>
        <begin position="110"/>
        <end position="115"/>
    </location>
</feature>
<feature type="helix" evidence="8">
    <location>
        <begin position="118"/>
        <end position="124"/>
    </location>
</feature>
<feature type="helix" evidence="8">
    <location>
        <begin position="128"/>
        <end position="133"/>
    </location>
</feature>
<feature type="helix" evidence="8">
    <location>
        <begin position="137"/>
        <end position="143"/>
    </location>
</feature>
<feature type="helix" evidence="8">
    <location>
        <begin position="145"/>
        <end position="169"/>
    </location>
</feature>
<feature type="strand" evidence="8">
    <location>
        <begin position="176"/>
        <end position="181"/>
    </location>
</feature>
<feature type="helix" evidence="8">
    <location>
        <begin position="187"/>
        <end position="195"/>
    </location>
</feature>
<feature type="strand" evidence="8">
    <location>
        <begin position="200"/>
        <end position="205"/>
    </location>
</feature>
<feature type="helix" evidence="8">
    <location>
        <begin position="207"/>
        <end position="219"/>
    </location>
</feature>
<feature type="helix" evidence="8">
    <location>
        <begin position="223"/>
        <end position="225"/>
    </location>
</feature>
<feature type="strand" evidence="8">
    <location>
        <begin position="226"/>
        <end position="230"/>
    </location>
</feature>
<feature type="turn" evidence="8">
    <location>
        <begin position="233"/>
        <end position="235"/>
    </location>
</feature>
<feature type="strand" evidence="8">
    <location>
        <begin position="242"/>
        <end position="248"/>
    </location>
</feature>
<feature type="helix" evidence="8">
    <location>
        <begin position="250"/>
        <end position="252"/>
    </location>
</feature>
<feature type="helix" evidence="8">
    <location>
        <begin position="255"/>
        <end position="268"/>
    </location>
</feature>
<feature type="strand" evidence="8">
    <location>
        <begin position="274"/>
        <end position="279"/>
    </location>
</feature>
<feature type="helix" evidence="8">
    <location>
        <begin position="290"/>
        <end position="302"/>
    </location>
</feature>
<feature type="helix" evidence="8">
    <location>
        <begin position="309"/>
        <end position="317"/>
    </location>
</feature>
<feature type="turn" evidence="8">
    <location>
        <begin position="318"/>
        <end position="320"/>
    </location>
</feature>
<feature type="strand" evidence="8">
    <location>
        <begin position="321"/>
        <end position="328"/>
    </location>
</feature>
<feature type="strand" evidence="8">
    <location>
        <begin position="330"/>
        <end position="332"/>
    </location>
</feature>
<feature type="strand" evidence="8">
    <location>
        <begin position="334"/>
        <end position="340"/>
    </location>
</feature>